<name>YE075_YEAST</name>
<gene>
    <name type="ordered locus">YEL075W-A</name>
    <name type="ORF">YEL076W-C</name>
</gene>
<protein>
    <recommendedName>
        <fullName>Putative uncharacterized protein YEL075W-A</fullName>
    </recommendedName>
</protein>
<proteinExistence type="uncertain"/>
<dbReference type="EMBL" id="U18795">
    <property type="protein sequence ID" value="AAB65035.1"/>
    <property type="molecule type" value="Genomic_DNA"/>
</dbReference>
<dbReference type="PIR" id="S53587">
    <property type="entry name" value="S53587"/>
</dbReference>
<dbReference type="STRING" id="4932.YEL075W-A"/>
<dbReference type="PaxDb" id="4932-YEL075W-A"/>
<dbReference type="EnsemblFungi" id="YEL075W-A_mRNA">
    <property type="protein sequence ID" value="YEL075W-A"/>
    <property type="gene ID" value="YEL075W-A"/>
</dbReference>
<dbReference type="AGR" id="SGD:S000002956"/>
<dbReference type="SGD" id="S000002956">
    <property type="gene designation" value="YEL075W-A"/>
</dbReference>
<dbReference type="GeneTree" id="ENSGT00940000180639"/>
<dbReference type="HOGENOM" id="CLU_1476263_0_0_1"/>
<comment type="miscellaneous">
    <text evidence="2">Partially overlaps YEL075C and YEL076C.</text>
</comment>
<comment type="caution">
    <text evidence="3">Product of a dubious gene prediction unlikely to encode a functional protein. Because of that it is not part of the S.cerevisiae S288c complete/reference proteome set.</text>
</comment>
<reference key="1">
    <citation type="journal article" date="1997" name="Nature">
        <title>The nucleotide sequence of Saccharomyces cerevisiae chromosome V.</title>
        <authorList>
            <person name="Dietrich F.S."/>
            <person name="Mulligan J.T."/>
            <person name="Hennessy K.M."/>
            <person name="Yelton M.A."/>
            <person name="Allen E."/>
            <person name="Araujo R."/>
            <person name="Aviles E."/>
            <person name="Berno A."/>
            <person name="Brennan T."/>
            <person name="Carpenter J."/>
            <person name="Chen E."/>
            <person name="Cherry J.M."/>
            <person name="Chung E."/>
            <person name="Duncan M."/>
            <person name="Guzman E."/>
            <person name="Hartzell G."/>
            <person name="Hunicke-Smith S."/>
            <person name="Hyman R.W."/>
            <person name="Kayser A."/>
            <person name="Komp C."/>
            <person name="Lashkari D."/>
            <person name="Lew H."/>
            <person name="Lin D."/>
            <person name="Mosedale D."/>
            <person name="Nakahara K."/>
            <person name="Namath A."/>
            <person name="Norgren R."/>
            <person name="Oefner P."/>
            <person name="Oh C."/>
            <person name="Petel F.X."/>
            <person name="Roberts D."/>
            <person name="Sehl P."/>
            <person name="Schramm S."/>
            <person name="Shogren T."/>
            <person name="Smith V."/>
            <person name="Taylor P."/>
            <person name="Wei Y."/>
            <person name="Botstein D."/>
            <person name="Davis R.W."/>
        </authorList>
    </citation>
    <scope>NUCLEOTIDE SEQUENCE [LARGE SCALE GENOMIC DNA]</scope>
    <source>
        <strain>ATCC 204508 / S288c</strain>
    </source>
</reference>
<reference key="2">
    <citation type="journal article" date="2014" name="G3 (Bethesda)">
        <title>The reference genome sequence of Saccharomyces cerevisiae: Then and now.</title>
        <authorList>
            <person name="Engel S.R."/>
            <person name="Dietrich F.S."/>
            <person name="Fisk D.G."/>
            <person name="Binkley G."/>
            <person name="Balakrishnan R."/>
            <person name="Costanzo M.C."/>
            <person name="Dwight S.S."/>
            <person name="Hitz B.C."/>
            <person name="Karra K."/>
            <person name="Nash R.S."/>
            <person name="Weng S."/>
            <person name="Wong E.D."/>
            <person name="Lloyd P."/>
            <person name="Skrzypek M.S."/>
            <person name="Miyasato S.R."/>
            <person name="Simison M."/>
            <person name="Cherry J.M."/>
        </authorList>
    </citation>
    <scope>GENOME REANNOTATION</scope>
    <source>
        <strain>ATCC 204508 / S288c</strain>
    </source>
</reference>
<organism>
    <name type="scientific">Saccharomyces cerevisiae (strain ATCC 204508 / S288c)</name>
    <name type="common">Baker's yeast</name>
    <dbReference type="NCBI Taxonomy" id="559292"/>
    <lineage>
        <taxon>Eukaryota</taxon>
        <taxon>Fungi</taxon>
        <taxon>Dikarya</taxon>
        <taxon>Ascomycota</taxon>
        <taxon>Saccharomycotina</taxon>
        <taxon>Saccharomycetes</taxon>
        <taxon>Saccharomycetales</taxon>
        <taxon>Saccharomycetaceae</taxon>
        <taxon>Saccharomyces</taxon>
    </lineage>
</organism>
<evidence type="ECO:0000256" key="1">
    <source>
        <dbReference type="SAM" id="MobiDB-lite"/>
    </source>
</evidence>
<evidence type="ECO:0000305" key="2"/>
<evidence type="ECO:0000305" key="3">
    <source>
    </source>
</evidence>
<accession>P89888</accession>
<sequence length="203" mass="22796">MGSSFVIDRSSSSPAPPRGPAPKLSAHARKIICKISPNRSFLFIISLHICEKYFISMGLRGHRSRFSRSVSTFFSPGKLACIAHLRVGCQIVPIFPYGAFLKTPYNRCAGNKVSESTHRRAVVRPSTRYFVTTFQDTETQLIIVSSVEVKKRKGIVILSIEFQSMHLKQRVDHHVVCLKGLVRPGNLVRLQQTSGTFLHFSRP</sequence>
<feature type="chain" id="PRO_0000299657" description="Putative uncharacterized protein YEL075W-A">
    <location>
        <begin position="1"/>
        <end position="203"/>
    </location>
</feature>
<feature type="region of interest" description="Disordered" evidence="1">
    <location>
        <begin position="1"/>
        <end position="23"/>
    </location>
</feature>